<accession>A9MM14</accession>
<comment type="function">
    <text evidence="1">Catalyzes the hydrolysis of 4-amino-2-methyl-5-hydroxymethylpyrimidine pyrophosphate (HMP-PP) to 4-amino-2-methyl-5-hydroxymethylpyrimidine phosphate (HMP-P).</text>
</comment>
<comment type="catalytic activity">
    <reaction evidence="1">
        <text>4-amino-2-methyl-5-(diphosphooxymethyl)pyrimidine + H2O = 4-amino-2-methyl-5-(phosphooxymethyl)pyrimidine + phosphate + H(+)</text>
        <dbReference type="Rhea" id="RHEA:27914"/>
        <dbReference type="ChEBI" id="CHEBI:15377"/>
        <dbReference type="ChEBI" id="CHEBI:15378"/>
        <dbReference type="ChEBI" id="CHEBI:43474"/>
        <dbReference type="ChEBI" id="CHEBI:57841"/>
        <dbReference type="ChEBI" id="CHEBI:58354"/>
    </reaction>
</comment>
<comment type="cofactor">
    <cofactor evidence="1">
        <name>Mg(2+)</name>
        <dbReference type="ChEBI" id="CHEBI:18420"/>
    </cofactor>
</comment>
<comment type="similarity">
    <text evidence="1">Belongs to the HAD-like hydrolase superfamily. Cof family.</text>
</comment>
<comment type="sequence caution" evidence="2">
    <conflict type="erroneous initiation">
        <sequence resource="EMBL-CDS" id="ABX22336"/>
    </conflict>
    <text>Extended N-terminus.</text>
</comment>
<reference key="1">
    <citation type="submission" date="2007-11" db="EMBL/GenBank/DDBJ databases">
        <authorList>
            <consortium name="The Salmonella enterica serovar Arizonae Genome Sequencing Project"/>
            <person name="McClelland M."/>
            <person name="Sanderson E.K."/>
            <person name="Porwollik S."/>
            <person name="Spieth J."/>
            <person name="Clifton W.S."/>
            <person name="Fulton R."/>
            <person name="Chunyan W."/>
            <person name="Wollam A."/>
            <person name="Shah N."/>
            <person name="Pepin K."/>
            <person name="Bhonagiri V."/>
            <person name="Nash W."/>
            <person name="Johnson M."/>
            <person name="Thiruvilangam P."/>
            <person name="Wilson R."/>
        </authorList>
    </citation>
    <scope>NUCLEOTIDE SEQUENCE [LARGE SCALE GENOMIC DNA]</scope>
    <source>
        <strain>ATCC BAA-731 / CDC346-86 / RSK2980</strain>
    </source>
</reference>
<protein>
    <recommendedName>
        <fullName evidence="1">HMP-PP phosphatase</fullName>
        <ecNumber evidence="1">3.6.1.-</ecNumber>
    </recommendedName>
</protein>
<sequence>MARLAAFDMDGTLLMPDHQLGRETIATLSRLRERDITLTFATGRHVLEMRHILGTLSLDAYLITGNGTRIHSLEGDVLYRQDLDPQVADTVMHHAWDTGASMHVFNDNGWFTGQEIPALLQAHVYSGFRYQVIDIKSIPAHQVMKICFCGDHDSLIRLRIQLNETLEERAHLCFSAVDCLEVLPLGCNKGSALAVLSDHLGLSLADCMAFGDAMNDREMLGSVGQGLIMGNAMPQLIAALPHLSVIGHCGHQAVSHFLTHWLDNPHLPYSPE</sequence>
<evidence type="ECO:0000255" key="1">
    <source>
        <dbReference type="HAMAP-Rule" id="MF_01847"/>
    </source>
</evidence>
<evidence type="ECO:0000305" key="2"/>
<proteinExistence type="inferred from homology"/>
<feature type="chain" id="PRO_0000342988" description="HMP-PP phosphatase">
    <location>
        <begin position="1"/>
        <end position="272"/>
    </location>
</feature>
<feature type="active site" description="Nucleophile" evidence="1">
    <location>
        <position position="8"/>
    </location>
</feature>
<feature type="binding site" evidence="1">
    <location>
        <position position="8"/>
    </location>
    <ligand>
        <name>Mg(2+)</name>
        <dbReference type="ChEBI" id="CHEBI:18420"/>
    </ligand>
</feature>
<feature type="binding site" evidence="1">
    <location>
        <position position="10"/>
    </location>
    <ligand>
        <name>Mg(2+)</name>
        <dbReference type="ChEBI" id="CHEBI:18420"/>
    </ligand>
</feature>
<feature type="binding site" evidence="1">
    <location>
        <position position="212"/>
    </location>
    <ligand>
        <name>Mg(2+)</name>
        <dbReference type="ChEBI" id="CHEBI:18420"/>
    </ligand>
</feature>
<gene>
    <name evidence="1" type="primary">cof</name>
    <name type="ordered locus">SARI_02477</name>
</gene>
<organism>
    <name type="scientific">Salmonella arizonae (strain ATCC BAA-731 / CDC346-86 / RSK2980)</name>
    <dbReference type="NCBI Taxonomy" id="41514"/>
    <lineage>
        <taxon>Bacteria</taxon>
        <taxon>Pseudomonadati</taxon>
        <taxon>Pseudomonadota</taxon>
        <taxon>Gammaproteobacteria</taxon>
        <taxon>Enterobacterales</taxon>
        <taxon>Enterobacteriaceae</taxon>
        <taxon>Salmonella</taxon>
    </lineage>
</organism>
<keyword id="KW-0378">Hydrolase</keyword>
<keyword id="KW-0460">Magnesium</keyword>
<keyword id="KW-0479">Metal-binding</keyword>
<keyword id="KW-1185">Reference proteome</keyword>
<name>COF_SALAR</name>
<dbReference type="EC" id="3.6.1.-" evidence="1"/>
<dbReference type="EMBL" id="CP000880">
    <property type="protein sequence ID" value="ABX22336.1"/>
    <property type="status" value="ALT_INIT"/>
    <property type="molecule type" value="Genomic_DNA"/>
</dbReference>
<dbReference type="SMR" id="A9MM14"/>
<dbReference type="STRING" id="41514.SARI_02477"/>
<dbReference type="KEGG" id="ses:SARI_02477"/>
<dbReference type="HOGENOM" id="CLU_044146_5_2_6"/>
<dbReference type="Proteomes" id="UP000002084">
    <property type="component" value="Chromosome"/>
</dbReference>
<dbReference type="GO" id="GO:0002145">
    <property type="term" value="F:4-amino-5-hydroxymethyl-2-methylpyrimidine diphosphatase activity"/>
    <property type="evidence" value="ECO:0007669"/>
    <property type="project" value="RHEA"/>
</dbReference>
<dbReference type="GO" id="GO:0000287">
    <property type="term" value="F:magnesium ion binding"/>
    <property type="evidence" value="ECO:0000250"/>
    <property type="project" value="UniProtKB"/>
</dbReference>
<dbReference type="GO" id="GO:0016791">
    <property type="term" value="F:phosphatase activity"/>
    <property type="evidence" value="ECO:0000250"/>
    <property type="project" value="UniProtKB"/>
</dbReference>
<dbReference type="CDD" id="cd07516">
    <property type="entry name" value="HAD_Pase"/>
    <property type="match status" value="1"/>
</dbReference>
<dbReference type="FunFam" id="3.30.1240.10:FF:000002">
    <property type="entry name" value="HMP-PP phosphatase"/>
    <property type="match status" value="1"/>
</dbReference>
<dbReference type="Gene3D" id="3.30.1240.10">
    <property type="match status" value="1"/>
</dbReference>
<dbReference type="Gene3D" id="3.40.50.1000">
    <property type="entry name" value="HAD superfamily/HAD-like"/>
    <property type="match status" value="1"/>
</dbReference>
<dbReference type="HAMAP" id="MF_01847">
    <property type="entry name" value="HMP_PP_phosphat"/>
    <property type="match status" value="1"/>
</dbReference>
<dbReference type="InterPro" id="IPR000150">
    <property type="entry name" value="Cof"/>
</dbReference>
<dbReference type="InterPro" id="IPR036412">
    <property type="entry name" value="HAD-like_sf"/>
</dbReference>
<dbReference type="InterPro" id="IPR006379">
    <property type="entry name" value="HAD-SF_hydro_IIB"/>
</dbReference>
<dbReference type="InterPro" id="IPR023214">
    <property type="entry name" value="HAD_sf"/>
</dbReference>
<dbReference type="InterPro" id="IPR023938">
    <property type="entry name" value="HMP-PP_phosphatase"/>
</dbReference>
<dbReference type="NCBIfam" id="TIGR00099">
    <property type="entry name" value="Cof-subfamily"/>
    <property type="match status" value="1"/>
</dbReference>
<dbReference type="NCBIfam" id="TIGR01484">
    <property type="entry name" value="HAD-SF-IIB"/>
    <property type="match status" value="1"/>
</dbReference>
<dbReference type="NCBIfam" id="NF011705">
    <property type="entry name" value="PRK15126.1"/>
    <property type="match status" value="1"/>
</dbReference>
<dbReference type="PANTHER" id="PTHR47267">
    <property type="match status" value="1"/>
</dbReference>
<dbReference type="PANTHER" id="PTHR47267:SF2">
    <property type="entry name" value="HMP-PP PHOSPHATASE"/>
    <property type="match status" value="1"/>
</dbReference>
<dbReference type="Pfam" id="PF08282">
    <property type="entry name" value="Hydrolase_3"/>
    <property type="match status" value="1"/>
</dbReference>
<dbReference type="SFLD" id="SFLDG01140">
    <property type="entry name" value="C2.B:_Phosphomannomutase_and_P"/>
    <property type="match status" value="1"/>
</dbReference>
<dbReference type="SFLD" id="SFLDS00003">
    <property type="entry name" value="Haloacid_Dehalogenase"/>
    <property type="match status" value="1"/>
</dbReference>
<dbReference type="SUPFAM" id="SSF56784">
    <property type="entry name" value="HAD-like"/>
    <property type="match status" value="1"/>
</dbReference>
<dbReference type="PROSITE" id="PS01228">
    <property type="entry name" value="COF_1"/>
    <property type="match status" value="1"/>
</dbReference>
<dbReference type="PROSITE" id="PS01229">
    <property type="entry name" value="COF_2"/>
    <property type="match status" value="1"/>
</dbReference>